<dbReference type="EMBL" id="CP000802">
    <property type="protein sequence ID" value="ABV04900.1"/>
    <property type="molecule type" value="Genomic_DNA"/>
</dbReference>
<dbReference type="RefSeq" id="WP_000130305.1">
    <property type="nucleotide sequence ID" value="NC_009800.1"/>
</dbReference>
<dbReference type="SMR" id="A7ZX96"/>
<dbReference type="GeneID" id="93777016"/>
<dbReference type="KEGG" id="ecx:EcHS_A0515"/>
<dbReference type="HOGENOM" id="CLU_014218_8_2_6"/>
<dbReference type="GO" id="GO:0009376">
    <property type="term" value="C:HslUV protease complex"/>
    <property type="evidence" value="ECO:0007669"/>
    <property type="project" value="TreeGrafter"/>
</dbReference>
<dbReference type="GO" id="GO:0005524">
    <property type="term" value="F:ATP binding"/>
    <property type="evidence" value="ECO:0007669"/>
    <property type="project" value="UniProtKB-UniRule"/>
</dbReference>
<dbReference type="GO" id="GO:0016887">
    <property type="term" value="F:ATP hydrolysis activity"/>
    <property type="evidence" value="ECO:0007669"/>
    <property type="project" value="InterPro"/>
</dbReference>
<dbReference type="GO" id="GO:0140662">
    <property type="term" value="F:ATP-dependent protein folding chaperone"/>
    <property type="evidence" value="ECO:0007669"/>
    <property type="project" value="InterPro"/>
</dbReference>
<dbReference type="GO" id="GO:0046983">
    <property type="term" value="F:protein dimerization activity"/>
    <property type="evidence" value="ECO:0007669"/>
    <property type="project" value="InterPro"/>
</dbReference>
<dbReference type="GO" id="GO:0051082">
    <property type="term" value="F:unfolded protein binding"/>
    <property type="evidence" value="ECO:0007669"/>
    <property type="project" value="UniProtKB-UniRule"/>
</dbReference>
<dbReference type="GO" id="GO:0008270">
    <property type="term" value="F:zinc ion binding"/>
    <property type="evidence" value="ECO:0007669"/>
    <property type="project" value="InterPro"/>
</dbReference>
<dbReference type="GO" id="GO:0051301">
    <property type="term" value="P:cell division"/>
    <property type="evidence" value="ECO:0007669"/>
    <property type="project" value="TreeGrafter"/>
</dbReference>
<dbReference type="GO" id="GO:0051603">
    <property type="term" value="P:proteolysis involved in protein catabolic process"/>
    <property type="evidence" value="ECO:0007669"/>
    <property type="project" value="TreeGrafter"/>
</dbReference>
<dbReference type="CDD" id="cd19497">
    <property type="entry name" value="RecA-like_ClpX"/>
    <property type="match status" value="1"/>
</dbReference>
<dbReference type="FunFam" id="1.10.8.60:FF:000002">
    <property type="entry name" value="ATP-dependent Clp protease ATP-binding subunit ClpX"/>
    <property type="match status" value="1"/>
</dbReference>
<dbReference type="FunFam" id="3.40.50.300:FF:000005">
    <property type="entry name" value="ATP-dependent Clp protease ATP-binding subunit ClpX"/>
    <property type="match status" value="1"/>
</dbReference>
<dbReference type="Gene3D" id="1.10.8.60">
    <property type="match status" value="1"/>
</dbReference>
<dbReference type="Gene3D" id="6.20.220.10">
    <property type="entry name" value="ClpX chaperone, C4-type zinc finger domain"/>
    <property type="match status" value="1"/>
</dbReference>
<dbReference type="Gene3D" id="3.40.50.300">
    <property type="entry name" value="P-loop containing nucleotide triphosphate hydrolases"/>
    <property type="match status" value="1"/>
</dbReference>
<dbReference type="HAMAP" id="MF_00175">
    <property type="entry name" value="ClpX"/>
    <property type="match status" value="1"/>
</dbReference>
<dbReference type="InterPro" id="IPR003593">
    <property type="entry name" value="AAA+_ATPase"/>
</dbReference>
<dbReference type="InterPro" id="IPR050052">
    <property type="entry name" value="ATP-dep_Clp_protease_ClpX"/>
</dbReference>
<dbReference type="InterPro" id="IPR003959">
    <property type="entry name" value="ATPase_AAA_core"/>
</dbReference>
<dbReference type="InterPro" id="IPR019489">
    <property type="entry name" value="Clp_ATPase_C"/>
</dbReference>
<dbReference type="InterPro" id="IPR004487">
    <property type="entry name" value="Clp_protease_ATP-bd_su_ClpX"/>
</dbReference>
<dbReference type="InterPro" id="IPR046425">
    <property type="entry name" value="ClpX_bact"/>
</dbReference>
<dbReference type="InterPro" id="IPR027417">
    <property type="entry name" value="P-loop_NTPase"/>
</dbReference>
<dbReference type="InterPro" id="IPR010603">
    <property type="entry name" value="Znf_CppX_C4"/>
</dbReference>
<dbReference type="InterPro" id="IPR038366">
    <property type="entry name" value="Znf_CppX_C4_sf"/>
</dbReference>
<dbReference type="NCBIfam" id="TIGR00382">
    <property type="entry name" value="clpX"/>
    <property type="match status" value="1"/>
</dbReference>
<dbReference type="NCBIfam" id="NF003745">
    <property type="entry name" value="PRK05342.1"/>
    <property type="match status" value="1"/>
</dbReference>
<dbReference type="PANTHER" id="PTHR48102:SF7">
    <property type="entry name" value="ATP-DEPENDENT CLP PROTEASE ATP-BINDING SUBUNIT CLPX-LIKE, MITOCHONDRIAL"/>
    <property type="match status" value="1"/>
</dbReference>
<dbReference type="PANTHER" id="PTHR48102">
    <property type="entry name" value="ATP-DEPENDENT CLP PROTEASE ATP-BINDING SUBUNIT CLPX-LIKE, MITOCHONDRIAL-RELATED"/>
    <property type="match status" value="1"/>
</dbReference>
<dbReference type="Pfam" id="PF07724">
    <property type="entry name" value="AAA_2"/>
    <property type="match status" value="1"/>
</dbReference>
<dbReference type="Pfam" id="PF10431">
    <property type="entry name" value="ClpB_D2-small"/>
    <property type="match status" value="1"/>
</dbReference>
<dbReference type="Pfam" id="PF06689">
    <property type="entry name" value="zf-C4_ClpX"/>
    <property type="match status" value="1"/>
</dbReference>
<dbReference type="SMART" id="SM00382">
    <property type="entry name" value="AAA"/>
    <property type="match status" value="1"/>
</dbReference>
<dbReference type="SMART" id="SM01086">
    <property type="entry name" value="ClpB_D2-small"/>
    <property type="match status" value="1"/>
</dbReference>
<dbReference type="SMART" id="SM00994">
    <property type="entry name" value="zf-C4_ClpX"/>
    <property type="match status" value="1"/>
</dbReference>
<dbReference type="SUPFAM" id="SSF57716">
    <property type="entry name" value="Glucocorticoid receptor-like (DNA-binding domain)"/>
    <property type="match status" value="1"/>
</dbReference>
<dbReference type="SUPFAM" id="SSF52540">
    <property type="entry name" value="P-loop containing nucleoside triphosphate hydrolases"/>
    <property type="match status" value="1"/>
</dbReference>
<dbReference type="PROSITE" id="PS51902">
    <property type="entry name" value="CLPX_ZB"/>
    <property type="match status" value="1"/>
</dbReference>
<accession>A7ZX96</accession>
<comment type="function">
    <text evidence="1">ATP-dependent specificity component of the Clp protease. It directs the protease to specific substrates. Can perform chaperone functions in the absence of ClpP.</text>
</comment>
<comment type="subunit">
    <text evidence="1">Component of the ClpX-ClpP complex. Forms a hexameric ring that, in the presence of ATP, binds to fourteen ClpP subunits assembled into a disk-like structure with a central cavity, resembling the structure of eukaryotic proteasomes.</text>
</comment>
<comment type="similarity">
    <text evidence="1">Belongs to the ClpX chaperone family.</text>
</comment>
<keyword id="KW-0067">ATP-binding</keyword>
<keyword id="KW-0143">Chaperone</keyword>
<keyword id="KW-0479">Metal-binding</keyword>
<keyword id="KW-0547">Nucleotide-binding</keyword>
<keyword id="KW-0862">Zinc</keyword>
<protein>
    <recommendedName>
        <fullName evidence="1">ATP-dependent Clp protease ATP-binding subunit ClpX</fullName>
    </recommendedName>
</protein>
<proteinExistence type="inferred from homology"/>
<organism>
    <name type="scientific">Escherichia coli O9:H4 (strain HS)</name>
    <dbReference type="NCBI Taxonomy" id="331112"/>
    <lineage>
        <taxon>Bacteria</taxon>
        <taxon>Pseudomonadati</taxon>
        <taxon>Pseudomonadota</taxon>
        <taxon>Gammaproteobacteria</taxon>
        <taxon>Enterobacterales</taxon>
        <taxon>Enterobacteriaceae</taxon>
        <taxon>Escherichia</taxon>
    </lineage>
</organism>
<name>CLPX_ECOHS</name>
<reference key="1">
    <citation type="journal article" date="2008" name="J. Bacteriol.">
        <title>The pangenome structure of Escherichia coli: comparative genomic analysis of E. coli commensal and pathogenic isolates.</title>
        <authorList>
            <person name="Rasko D.A."/>
            <person name="Rosovitz M.J."/>
            <person name="Myers G.S.A."/>
            <person name="Mongodin E.F."/>
            <person name="Fricke W.F."/>
            <person name="Gajer P."/>
            <person name="Crabtree J."/>
            <person name="Sebaihia M."/>
            <person name="Thomson N.R."/>
            <person name="Chaudhuri R."/>
            <person name="Henderson I.R."/>
            <person name="Sperandio V."/>
            <person name="Ravel J."/>
        </authorList>
    </citation>
    <scope>NUCLEOTIDE SEQUENCE [LARGE SCALE GENOMIC DNA]</scope>
    <source>
        <strain>HS</strain>
    </source>
</reference>
<evidence type="ECO:0000255" key="1">
    <source>
        <dbReference type="HAMAP-Rule" id="MF_00175"/>
    </source>
</evidence>
<evidence type="ECO:0000255" key="2">
    <source>
        <dbReference type="PROSITE-ProRule" id="PRU01250"/>
    </source>
</evidence>
<gene>
    <name evidence="1" type="primary">clpX</name>
    <name type="ordered locus">EcHS_A0515</name>
</gene>
<feature type="chain" id="PRO_1000058338" description="ATP-dependent Clp protease ATP-binding subunit ClpX">
    <location>
        <begin position="1"/>
        <end position="424"/>
    </location>
</feature>
<feature type="domain" description="ClpX-type ZB" evidence="2">
    <location>
        <begin position="2"/>
        <end position="56"/>
    </location>
</feature>
<feature type="binding site" evidence="2">
    <location>
        <position position="15"/>
    </location>
    <ligand>
        <name>Zn(2+)</name>
        <dbReference type="ChEBI" id="CHEBI:29105"/>
    </ligand>
</feature>
<feature type="binding site" evidence="2">
    <location>
        <position position="18"/>
    </location>
    <ligand>
        <name>Zn(2+)</name>
        <dbReference type="ChEBI" id="CHEBI:29105"/>
    </ligand>
</feature>
<feature type="binding site" evidence="2">
    <location>
        <position position="37"/>
    </location>
    <ligand>
        <name>Zn(2+)</name>
        <dbReference type="ChEBI" id="CHEBI:29105"/>
    </ligand>
</feature>
<feature type="binding site" evidence="2">
    <location>
        <position position="40"/>
    </location>
    <ligand>
        <name>Zn(2+)</name>
        <dbReference type="ChEBI" id="CHEBI:29105"/>
    </ligand>
</feature>
<feature type="binding site" evidence="1">
    <location>
        <begin position="120"/>
        <end position="127"/>
    </location>
    <ligand>
        <name>ATP</name>
        <dbReference type="ChEBI" id="CHEBI:30616"/>
    </ligand>
</feature>
<sequence>MTDKRKDGSGKLLYCSFCGKSQHEVRKLIAGPSVYICDECVDLCNDIIREEIKEVAPHRERSALPTPHEIRNHLDDYVIGQEQAKKVLAVAVYNHYKRLRNGDTSNGVELGKSNILLIGPTGSGKTLLAETLARLLDVPFTMADATTLTEAGYVGEDVENIIQKLLQKCDYDVQKAQRGIVYIDEIDKISRKSDNPSITRDVSGEGVQQALLKLIEGTVAAVPPQGGRKHPQQEFLQVDTSKILFICGGAFAGLDKVISHRVETGSGIGFGATVKAKSDKASEGELLAQVEPEDLIKFGLIPEFIGRLPVVATLNELSEEALIQILKEPKNALTKQYQALFNLEGVDLEFRDEALDAIAKKAMARKTGARGLRSIVEAALLDTMYDLPSMEDVEKVVIDESVIDGQSKPLLIYGKPEAQQASGE</sequence>